<proteinExistence type="inferred from homology"/>
<keyword id="KW-1185">Reference proteome</keyword>
<accession>Q5ZXZ4</accession>
<reference key="1">
    <citation type="journal article" date="2004" name="Science">
        <title>The genomic sequence of the accidental pathogen Legionella pneumophila.</title>
        <authorList>
            <person name="Chien M."/>
            <person name="Morozova I."/>
            <person name="Shi S."/>
            <person name="Sheng H."/>
            <person name="Chen J."/>
            <person name="Gomez S.M."/>
            <person name="Asamani G."/>
            <person name="Hill K."/>
            <person name="Nuara J."/>
            <person name="Feder M."/>
            <person name="Rineer J."/>
            <person name="Greenberg J.J."/>
            <person name="Steshenko V."/>
            <person name="Park S.H."/>
            <person name="Zhao B."/>
            <person name="Teplitskaya E."/>
            <person name="Edwards J.R."/>
            <person name="Pampou S."/>
            <person name="Georghiou A."/>
            <person name="Chou I.-C."/>
            <person name="Iannuccilli W."/>
            <person name="Ulz M.E."/>
            <person name="Kim D.H."/>
            <person name="Geringer-Sameth A."/>
            <person name="Goldsberry C."/>
            <person name="Morozov P."/>
            <person name="Fischer S.G."/>
            <person name="Segal G."/>
            <person name="Qu X."/>
            <person name="Rzhetsky A."/>
            <person name="Zhang P."/>
            <person name="Cayanis E."/>
            <person name="De Jong P.J."/>
            <person name="Ju J."/>
            <person name="Kalachikov S."/>
            <person name="Shuman H.A."/>
            <person name="Russo J.J."/>
        </authorList>
    </citation>
    <scope>NUCLEOTIDE SEQUENCE [LARGE SCALE GENOMIC DNA]</scope>
    <source>
        <strain>Philadelphia 1 / ATCC 33152 / DSM 7513</strain>
    </source>
</reference>
<gene>
    <name type="ordered locus">lpg0586</name>
</gene>
<evidence type="ECO:0000255" key="1">
    <source>
        <dbReference type="HAMAP-Rule" id="MF_00758"/>
    </source>
</evidence>
<comment type="similarity">
    <text evidence="1">Belongs to the UPF0301 (AlgH) family.</text>
</comment>
<organism>
    <name type="scientific">Legionella pneumophila subsp. pneumophila (strain Philadelphia 1 / ATCC 33152 / DSM 7513)</name>
    <dbReference type="NCBI Taxonomy" id="272624"/>
    <lineage>
        <taxon>Bacteria</taxon>
        <taxon>Pseudomonadati</taxon>
        <taxon>Pseudomonadota</taxon>
        <taxon>Gammaproteobacteria</taxon>
        <taxon>Legionellales</taxon>
        <taxon>Legionellaceae</taxon>
        <taxon>Legionella</taxon>
    </lineage>
</organism>
<dbReference type="EMBL" id="AE017354">
    <property type="protein sequence ID" value="AAU26675.1"/>
    <property type="molecule type" value="Genomic_DNA"/>
</dbReference>
<dbReference type="RefSeq" id="WP_010946323.1">
    <property type="nucleotide sequence ID" value="NC_002942.5"/>
</dbReference>
<dbReference type="RefSeq" id="YP_094622.1">
    <property type="nucleotide sequence ID" value="NC_002942.5"/>
</dbReference>
<dbReference type="SMR" id="Q5ZXZ4"/>
<dbReference type="STRING" id="272624.lpg0586"/>
<dbReference type="PaxDb" id="272624-lpg0586"/>
<dbReference type="KEGG" id="lpn:lpg0586"/>
<dbReference type="PATRIC" id="fig|272624.6.peg.598"/>
<dbReference type="eggNOG" id="COG1678">
    <property type="taxonomic scope" value="Bacteria"/>
</dbReference>
<dbReference type="HOGENOM" id="CLU_057596_1_0_6"/>
<dbReference type="OrthoDB" id="9807486at2"/>
<dbReference type="Proteomes" id="UP000000609">
    <property type="component" value="Chromosome"/>
</dbReference>
<dbReference type="GO" id="GO:0005829">
    <property type="term" value="C:cytosol"/>
    <property type="evidence" value="ECO:0007669"/>
    <property type="project" value="TreeGrafter"/>
</dbReference>
<dbReference type="Gene3D" id="3.40.1740.10">
    <property type="entry name" value="VC0467-like"/>
    <property type="match status" value="1"/>
</dbReference>
<dbReference type="HAMAP" id="MF_00758">
    <property type="entry name" value="UPF0301"/>
    <property type="match status" value="1"/>
</dbReference>
<dbReference type="InterPro" id="IPR003774">
    <property type="entry name" value="AlgH-like"/>
</dbReference>
<dbReference type="NCBIfam" id="NF001266">
    <property type="entry name" value="PRK00228.1-1"/>
    <property type="match status" value="1"/>
</dbReference>
<dbReference type="PANTHER" id="PTHR30327">
    <property type="entry name" value="UNCHARACTERIZED PROTEIN YQGE"/>
    <property type="match status" value="1"/>
</dbReference>
<dbReference type="PANTHER" id="PTHR30327:SF1">
    <property type="entry name" value="UPF0301 PROTEIN YQGE"/>
    <property type="match status" value="1"/>
</dbReference>
<dbReference type="Pfam" id="PF02622">
    <property type="entry name" value="DUF179"/>
    <property type="match status" value="1"/>
</dbReference>
<dbReference type="SUPFAM" id="SSF143456">
    <property type="entry name" value="VC0467-like"/>
    <property type="match status" value="1"/>
</dbReference>
<protein>
    <recommendedName>
        <fullName evidence="1">UPF0301 protein lpg0586</fullName>
    </recommendedName>
</protein>
<sequence length="187" mass="21131">MAIISSLANHLLIAMPSLKDPNFERSVVYLCEHNEQGSVGLIINRPLQFPLSIVFEQLQIEPIRVEKNGLPLLFGGPVQPERGFVIHKQMGGWRSSLFLQDEVTVTTSNDIIRAIAYDEGPKDVLITLGYAAWTEQQLEREIMSNTWLVCPYKSEILYEVPFEERWEYAGLTLGIKMNQLSSDAGHA</sequence>
<name>Y586_LEGPH</name>
<feature type="chain" id="PRO_0000258836" description="UPF0301 protein lpg0586">
    <location>
        <begin position="1"/>
        <end position="187"/>
    </location>
</feature>